<accession>Q9VP48</accession>
<accession>Q95R32</accession>
<dbReference type="EMBL" id="AE014296">
    <property type="protein sequence ID" value="AAF51708.2"/>
    <property type="molecule type" value="Genomic_DNA"/>
</dbReference>
<dbReference type="EMBL" id="AY061826">
    <property type="protein sequence ID" value="AAL27637.1"/>
    <property type="molecule type" value="mRNA"/>
</dbReference>
<dbReference type="RefSeq" id="NP_001287142.1">
    <property type="nucleotide sequence ID" value="NM_001300213.1"/>
</dbReference>
<dbReference type="RefSeq" id="NP_649303.2">
    <property type="nucleotide sequence ID" value="NM_141046.4"/>
</dbReference>
<dbReference type="SMR" id="Q9VP48"/>
<dbReference type="BioGRID" id="65607">
    <property type="interactions" value="21"/>
</dbReference>
<dbReference type="FunCoup" id="Q9VP48">
    <property type="interactions" value="221"/>
</dbReference>
<dbReference type="IntAct" id="Q9VP48">
    <property type="interactions" value="5"/>
</dbReference>
<dbReference type="STRING" id="7227.FBpp0304179"/>
<dbReference type="DNASU" id="40359"/>
<dbReference type="EnsemblMetazoa" id="FBtr0112677">
    <property type="protein sequence ID" value="FBpp0111589"/>
    <property type="gene ID" value="FBgn0086913"/>
</dbReference>
<dbReference type="EnsemblMetazoa" id="FBtr0345428">
    <property type="protein sequence ID" value="FBpp0311553"/>
    <property type="gene ID" value="FBgn0086913"/>
</dbReference>
<dbReference type="GeneID" id="40359"/>
<dbReference type="KEGG" id="dme:Dmel_CG34410"/>
<dbReference type="UCSC" id="CG34410-RB">
    <property type="organism name" value="d. melanogaster"/>
</dbReference>
<dbReference type="AGR" id="FB:FBgn0086913"/>
<dbReference type="CTD" id="25837"/>
<dbReference type="FlyBase" id="FBgn0086913">
    <property type="gene designation" value="Rab26"/>
</dbReference>
<dbReference type="VEuPathDB" id="VectorBase:FBgn0086913"/>
<dbReference type="eggNOG" id="KOG0083">
    <property type="taxonomic scope" value="Eukaryota"/>
</dbReference>
<dbReference type="GeneTree" id="ENSGT00940000167571"/>
<dbReference type="HOGENOM" id="CLU_041217_5_0_1"/>
<dbReference type="InParanoid" id="Q9VP48"/>
<dbReference type="OMA" id="DNAIMAP"/>
<dbReference type="OrthoDB" id="9989112at2759"/>
<dbReference type="PhylomeDB" id="Q9VP48"/>
<dbReference type="Reactome" id="R-DME-6798695">
    <property type="pathway name" value="Neutrophil degranulation"/>
</dbReference>
<dbReference type="Reactome" id="R-DME-8873719">
    <property type="pathway name" value="RAB geranylgeranylation"/>
</dbReference>
<dbReference type="SignaLink" id="Q9VP48"/>
<dbReference type="BioGRID-ORCS" id="40359">
    <property type="hits" value="0 hits in 3 CRISPR screens"/>
</dbReference>
<dbReference type="ChiTaRS" id="Rab26">
    <property type="organism name" value="fly"/>
</dbReference>
<dbReference type="GenomeRNAi" id="40359"/>
<dbReference type="PRO" id="PR:Q9VP48"/>
<dbReference type="Proteomes" id="UP000000803">
    <property type="component" value="Chromosome 3L"/>
</dbReference>
<dbReference type="Bgee" id="FBgn0086913">
    <property type="expression patterns" value="Expressed in adult octopaminergic neuron in brain and 153 other cell types or tissues"/>
</dbReference>
<dbReference type="ExpressionAtlas" id="Q9VP48">
    <property type="expression patterns" value="baseline and differential"/>
</dbReference>
<dbReference type="GO" id="GO:0005768">
    <property type="term" value="C:endosome"/>
    <property type="evidence" value="ECO:0000318"/>
    <property type="project" value="GO_Central"/>
</dbReference>
<dbReference type="GO" id="GO:0005794">
    <property type="term" value="C:Golgi apparatus"/>
    <property type="evidence" value="ECO:0000318"/>
    <property type="project" value="GO_Central"/>
</dbReference>
<dbReference type="GO" id="GO:0005886">
    <property type="term" value="C:plasma membrane"/>
    <property type="evidence" value="ECO:0000250"/>
    <property type="project" value="UniProtKB"/>
</dbReference>
<dbReference type="GO" id="GO:0055037">
    <property type="term" value="C:recycling endosome"/>
    <property type="evidence" value="ECO:0007005"/>
    <property type="project" value="FlyBase"/>
</dbReference>
<dbReference type="GO" id="GO:0045202">
    <property type="term" value="C:synapse"/>
    <property type="evidence" value="ECO:0007005"/>
    <property type="project" value="FlyBase"/>
</dbReference>
<dbReference type="GO" id="GO:0031982">
    <property type="term" value="C:vesicle"/>
    <property type="evidence" value="ECO:0000250"/>
    <property type="project" value="FlyBase"/>
</dbReference>
<dbReference type="GO" id="GO:0005525">
    <property type="term" value="F:GTP binding"/>
    <property type="evidence" value="ECO:0000250"/>
    <property type="project" value="UniProtKB"/>
</dbReference>
<dbReference type="GO" id="GO:0003924">
    <property type="term" value="F:GTPase activity"/>
    <property type="evidence" value="ECO:0000250"/>
    <property type="project" value="FlyBase"/>
</dbReference>
<dbReference type="GO" id="GO:0015031">
    <property type="term" value="P:protein transport"/>
    <property type="evidence" value="ECO:0007669"/>
    <property type="project" value="UniProtKB-KW"/>
</dbReference>
<dbReference type="GO" id="GO:0032482">
    <property type="term" value="P:Rab protein signal transduction"/>
    <property type="evidence" value="ECO:0000250"/>
    <property type="project" value="FlyBase"/>
</dbReference>
<dbReference type="GO" id="GO:0017157">
    <property type="term" value="P:regulation of exocytosis"/>
    <property type="evidence" value="ECO:0000250"/>
    <property type="project" value="UniProtKB"/>
</dbReference>
<dbReference type="GO" id="GO:0046718">
    <property type="term" value="P:symbiont entry into host cell"/>
    <property type="evidence" value="ECO:0007001"/>
    <property type="project" value="FlyBase"/>
</dbReference>
<dbReference type="GO" id="GO:0016192">
    <property type="term" value="P:vesicle-mediated transport"/>
    <property type="evidence" value="ECO:0000250"/>
    <property type="project" value="FlyBase"/>
</dbReference>
<dbReference type="CDD" id="cd04112">
    <property type="entry name" value="Rab26"/>
    <property type="match status" value="1"/>
</dbReference>
<dbReference type="FunFam" id="3.40.50.300:FF:001129">
    <property type="entry name" value="ras-related protein Rab-44 isoform X2"/>
    <property type="match status" value="1"/>
</dbReference>
<dbReference type="Gene3D" id="3.40.50.300">
    <property type="entry name" value="P-loop containing nucleotide triphosphate hydrolases"/>
    <property type="match status" value="1"/>
</dbReference>
<dbReference type="InterPro" id="IPR027417">
    <property type="entry name" value="P-loop_NTPase"/>
</dbReference>
<dbReference type="InterPro" id="IPR005225">
    <property type="entry name" value="Small_GTP-bd"/>
</dbReference>
<dbReference type="InterPro" id="IPR001806">
    <property type="entry name" value="Small_GTPase"/>
</dbReference>
<dbReference type="NCBIfam" id="TIGR00231">
    <property type="entry name" value="small_GTP"/>
    <property type="match status" value="1"/>
</dbReference>
<dbReference type="PANTHER" id="PTHR47978">
    <property type="match status" value="1"/>
</dbReference>
<dbReference type="Pfam" id="PF00071">
    <property type="entry name" value="Ras"/>
    <property type="match status" value="1"/>
</dbReference>
<dbReference type="PRINTS" id="PR00449">
    <property type="entry name" value="RASTRNSFRMNG"/>
</dbReference>
<dbReference type="SMART" id="SM00177">
    <property type="entry name" value="ARF"/>
    <property type="match status" value="1"/>
</dbReference>
<dbReference type="SMART" id="SM00175">
    <property type="entry name" value="RAB"/>
    <property type="match status" value="1"/>
</dbReference>
<dbReference type="SMART" id="SM00176">
    <property type="entry name" value="RAN"/>
    <property type="match status" value="1"/>
</dbReference>
<dbReference type="SMART" id="SM00173">
    <property type="entry name" value="RAS"/>
    <property type="match status" value="1"/>
</dbReference>
<dbReference type="SMART" id="SM00174">
    <property type="entry name" value="RHO"/>
    <property type="match status" value="1"/>
</dbReference>
<dbReference type="SUPFAM" id="SSF52540">
    <property type="entry name" value="P-loop containing nucleoside triphosphate hydrolases"/>
    <property type="match status" value="1"/>
</dbReference>
<dbReference type="PROSITE" id="PS51419">
    <property type="entry name" value="RAB"/>
    <property type="match status" value="1"/>
</dbReference>
<feature type="chain" id="PRO_0000274548" description="Ras-related protein Rab-26">
    <location>
        <begin position="1"/>
        <end position="385"/>
    </location>
</feature>
<feature type="propeptide" id="PRO_0000370824" description="Removed in mature form" evidence="4">
    <location>
        <begin position="386"/>
        <end position="388"/>
    </location>
</feature>
<feature type="region of interest" description="Disordered" evidence="5">
    <location>
        <begin position="1"/>
        <end position="115"/>
    </location>
</feature>
<feature type="short sequence motif" description="Effector region" evidence="2">
    <location>
        <begin position="219"/>
        <end position="228"/>
    </location>
</feature>
<feature type="compositionally biased region" description="Gly residues" evidence="5">
    <location>
        <begin position="7"/>
        <end position="21"/>
    </location>
</feature>
<feature type="compositionally biased region" description="Basic and acidic residues" evidence="5">
    <location>
        <begin position="47"/>
        <end position="56"/>
    </location>
</feature>
<feature type="compositionally biased region" description="Low complexity" evidence="5">
    <location>
        <begin position="67"/>
        <end position="86"/>
    </location>
</feature>
<feature type="compositionally biased region" description="Basic residues" evidence="5">
    <location>
        <begin position="87"/>
        <end position="109"/>
    </location>
</feature>
<feature type="binding site" evidence="2">
    <location>
        <begin position="197"/>
        <end position="204"/>
    </location>
    <ligand>
        <name>GTP</name>
        <dbReference type="ChEBI" id="CHEBI:37565"/>
    </ligand>
</feature>
<feature type="binding site" evidence="2">
    <location>
        <begin position="246"/>
        <end position="250"/>
    </location>
    <ligand>
        <name>GTP</name>
        <dbReference type="ChEBI" id="CHEBI:37565"/>
    </ligand>
</feature>
<feature type="binding site" evidence="2">
    <location>
        <begin position="304"/>
        <end position="307"/>
    </location>
    <ligand>
        <name>GTP</name>
        <dbReference type="ChEBI" id="CHEBI:37565"/>
    </ligand>
</feature>
<feature type="modified residue" description="Cysteine methyl ester" evidence="4">
    <location>
        <position position="385"/>
    </location>
</feature>
<feature type="lipid moiety-binding region" description="S-palmitoyl cysteine" evidence="4">
    <location>
        <position position="382"/>
    </location>
</feature>
<feature type="lipid moiety-binding region" description="S-geranylgeranyl cysteine" evidence="1">
    <location>
        <position position="385"/>
    </location>
</feature>
<feature type="sequence variant" description="In RNA edited version." evidence="8">
    <original>K</original>
    <variation>R</variation>
    <location>
        <position position="365"/>
    </location>
</feature>
<name>RAB26_DROME</name>
<organism>
    <name type="scientific">Drosophila melanogaster</name>
    <name type="common">Fruit fly</name>
    <dbReference type="NCBI Taxonomy" id="7227"/>
    <lineage>
        <taxon>Eukaryota</taxon>
        <taxon>Metazoa</taxon>
        <taxon>Ecdysozoa</taxon>
        <taxon>Arthropoda</taxon>
        <taxon>Hexapoda</taxon>
        <taxon>Insecta</taxon>
        <taxon>Pterygota</taxon>
        <taxon>Neoptera</taxon>
        <taxon>Endopterygota</taxon>
        <taxon>Diptera</taxon>
        <taxon>Brachycera</taxon>
        <taxon>Muscomorpha</taxon>
        <taxon>Ephydroidea</taxon>
        <taxon>Drosophilidae</taxon>
        <taxon>Drosophila</taxon>
        <taxon>Sophophora</taxon>
    </lineage>
</organism>
<protein>
    <recommendedName>
        <fullName>Ras-related protein Rab-26</fullName>
    </recommendedName>
</protein>
<proteinExistence type="evidence at transcript level"/>
<reference evidence="10" key="1">
    <citation type="journal article" date="2000" name="Science">
        <title>The genome sequence of Drosophila melanogaster.</title>
        <authorList>
            <person name="Adams M.D."/>
            <person name="Celniker S.E."/>
            <person name="Holt R.A."/>
            <person name="Evans C.A."/>
            <person name="Gocayne J.D."/>
            <person name="Amanatides P.G."/>
            <person name="Scherer S.E."/>
            <person name="Li P.W."/>
            <person name="Hoskins R.A."/>
            <person name="Galle R.F."/>
            <person name="George R.A."/>
            <person name="Lewis S.E."/>
            <person name="Richards S."/>
            <person name="Ashburner M."/>
            <person name="Henderson S.N."/>
            <person name="Sutton G.G."/>
            <person name="Wortman J.R."/>
            <person name="Yandell M.D."/>
            <person name="Zhang Q."/>
            <person name="Chen L.X."/>
            <person name="Brandon R.C."/>
            <person name="Rogers Y.-H.C."/>
            <person name="Blazej R.G."/>
            <person name="Champe M."/>
            <person name="Pfeiffer B.D."/>
            <person name="Wan K.H."/>
            <person name="Doyle C."/>
            <person name="Baxter E.G."/>
            <person name="Helt G."/>
            <person name="Nelson C.R."/>
            <person name="Miklos G.L.G."/>
            <person name="Abril J.F."/>
            <person name="Agbayani A."/>
            <person name="An H.-J."/>
            <person name="Andrews-Pfannkoch C."/>
            <person name="Baldwin D."/>
            <person name="Ballew R.M."/>
            <person name="Basu A."/>
            <person name="Baxendale J."/>
            <person name="Bayraktaroglu L."/>
            <person name="Beasley E.M."/>
            <person name="Beeson K.Y."/>
            <person name="Benos P.V."/>
            <person name="Berman B.P."/>
            <person name="Bhandari D."/>
            <person name="Bolshakov S."/>
            <person name="Borkova D."/>
            <person name="Botchan M.R."/>
            <person name="Bouck J."/>
            <person name="Brokstein P."/>
            <person name="Brottier P."/>
            <person name="Burtis K.C."/>
            <person name="Busam D.A."/>
            <person name="Butler H."/>
            <person name="Cadieu E."/>
            <person name="Center A."/>
            <person name="Chandra I."/>
            <person name="Cherry J.M."/>
            <person name="Cawley S."/>
            <person name="Dahlke C."/>
            <person name="Davenport L.B."/>
            <person name="Davies P."/>
            <person name="de Pablos B."/>
            <person name="Delcher A."/>
            <person name="Deng Z."/>
            <person name="Mays A.D."/>
            <person name="Dew I."/>
            <person name="Dietz S.M."/>
            <person name="Dodson K."/>
            <person name="Doup L.E."/>
            <person name="Downes M."/>
            <person name="Dugan-Rocha S."/>
            <person name="Dunkov B.C."/>
            <person name="Dunn P."/>
            <person name="Durbin K.J."/>
            <person name="Evangelista C.C."/>
            <person name="Ferraz C."/>
            <person name="Ferriera S."/>
            <person name="Fleischmann W."/>
            <person name="Fosler C."/>
            <person name="Gabrielian A.E."/>
            <person name="Garg N.S."/>
            <person name="Gelbart W.M."/>
            <person name="Glasser K."/>
            <person name="Glodek A."/>
            <person name="Gong F."/>
            <person name="Gorrell J.H."/>
            <person name="Gu Z."/>
            <person name="Guan P."/>
            <person name="Harris M."/>
            <person name="Harris N.L."/>
            <person name="Harvey D.A."/>
            <person name="Heiman T.J."/>
            <person name="Hernandez J.R."/>
            <person name="Houck J."/>
            <person name="Hostin D."/>
            <person name="Houston K.A."/>
            <person name="Howland T.J."/>
            <person name="Wei M.-H."/>
            <person name="Ibegwam C."/>
            <person name="Jalali M."/>
            <person name="Kalush F."/>
            <person name="Karpen G.H."/>
            <person name="Ke Z."/>
            <person name="Kennison J.A."/>
            <person name="Ketchum K.A."/>
            <person name="Kimmel B.E."/>
            <person name="Kodira C.D."/>
            <person name="Kraft C.L."/>
            <person name="Kravitz S."/>
            <person name="Kulp D."/>
            <person name="Lai Z."/>
            <person name="Lasko P."/>
            <person name="Lei Y."/>
            <person name="Levitsky A.A."/>
            <person name="Li J.H."/>
            <person name="Li Z."/>
            <person name="Liang Y."/>
            <person name="Lin X."/>
            <person name="Liu X."/>
            <person name="Mattei B."/>
            <person name="McIntosh T.C."/>
            <person name="McLeod M.P."/>
            <person name="McPherson D."/>
            <person name="Merkulov G."/>
            <person name="Milshina N.V."/>
            <person name="Mobarry C."/>
            <person name="Morris J."/>
            <person name="Moshrefi A."/>
            <person name="Mount S.M."/>
            <person name="Moy M."/>
            <person name="Murphy B."/>
            <person name="Murphy L."/>
            <person name="Muzny D.M."/>
            <person name="Nelson D.L."/>
            <person name="Nelson D.R."/>
            <person name="Nelson K.A."/>
            <person name="Nixon K."/>
            <person name="Nusskern D.R."/>
            <person name="Pacleb J.M."/>
            <person name="Palazzolo M."/>
            <person name="Pittman G.S."/>
            <person name="Pan S."/>
            <person name="Pollard J."/>
            <person name="Puri V."/>
            <person name="Reese M.G."/>
            <person name="Reinert K."/>
            <person name="Remington K."/>
            <person name="Saunders R.D.C."/>
            <person name="Scheeler F."/>
            <person name="Shen H."/>
            <person name="Shue B.C."/>
            <person name="Siden-Kiamos I."/>
            <person name="Simpson M."/>
            <person name="Skupski M.P."/>
            <person name="Smith T.J."/>
            <person name="Spier E."/>
            <person name="Spradling A.C."/>
            <person name="Stapleton M."/>
            <person name="Strong R."/>
            <person name="Sun E."/>
            <person name="Svirskas R."/>
            <person name="Tector C."/>
            <person name="Turner R."/>
            <person name="Venter E."/>
            <person name="Wang A.H."/>
            <person name="Wang X."/>
            <person name="Wang Z.-Y."/>
            <person name="Wassarman D.A."/>
            <person name="Weinstock G.M."/>
            <person name="Weissenbach J."/>
            <person name="Williams S.M."/>
            <person name="Woodage T."/>
            <person name="Worley K.C."/>
            <person name="Wu D."/>
            <person name="Yang S."/>
            <person name="Yao Q.A."/>
            <person name="Ye J."/>
            <person name="Yeh R.-F."/>
            <person name="Zaveri J.S."/>
            <person name="Zhan M."/>
            <person name="Zhang G."/>
            <person name="Zhao Q."/>
            <person name="Zheng L."/>
            <person name="Zheng X.H."/>
            <person name="Zhong F.N."/>
            <person name="Zhong W."/>
            <person name="Zhou X."/>
            <person name="Zhu S.C."/>
            <person name="Zhu X."/>
            <person name="Smith H.O."/>
            <person name="Gibbs R.A."/>
            <person name="Myers E.W."/>
            <person name="Rubin G.M."/>
            <person name="Venter J.C."/>
        </authorList>
    </citation>
    <scope>NUCLEOTIDE SEQUENCE [LARGE SCALE GENOMIC DNA]</scope>
    <source>
        <strain evidence="6">Berkeley</strain>
    </source>
</reference>
<reference evidence="9 10" key="2">
    <citation type="journal article" date="2002" name="Genome Biol.">
        <title>Annotation of the Drosophila melanogaster euchromatic genome: a systematic review.</title>
        <authorList>
            <person name="Misra S."/>
            <person name="Crosby M.A."/>
            <person name="Mungall C.J."/>
            <person name="Matthews B.B."/>
            <person name="Campbell K.S."/>
            <person name="Hradecky P."/>
            <person name="Huang Y."/>
            <person name="Kaminker J.S."/>
            <person name="Millburn G.H."/>
            <person name="Prochnik S.E."/>
            <person name="Smith C.D."/>
            <person name="Tupy J.L."/>
            <person name="Whitfield E.J."/>
            <person name="Bayraktaroglu L."/>
            <person name="Berman B.P."/>
            <person name="Bettencourt B.R."/>
            <person name="Celniker S.E."/>
            <person name="de Grey A.D.N.J."/>
            <person name="Drysdale R.A."/>
            <person name="Harris N.L."/>
            <person name="Richter J."/>
            <person name="Russo S."/>
            <person name="Schroeder A.J."/>
            <person name="Shu S.Q."/>
            <person name="Stapleton M."/>
            <person name="Yamada C."/>
            <person name="Ashburner M."/>
            <person name="Gelbart W.M."/>
            <person name="Rubin G.M."/>
            <person name="Lewis S.E."/>
        </authorList>
    </citation>
    <scope>GENOME REANNOTATION</scope>
    <source>
        <strain>Berkeley</strain>
    </source>
</reference>
<reference evidence="9 11" key="3">
    <citation type="journal article" date="2002" name="Genome Biol.">
        <title>A Drosophila full-length cDNA resource.</title>
        <authorList>
            <person name="Stapleton M."/>
            <person name="Carlson J.W."/>
            <person name="Brokstein P."/>
            <person name="Yu C."/>
            <person name="Champe M."/>
            <person name="George R.A."/>
            <person name="Guarin H."/>
            <person name="Kronmiller B."/>
            <person name="Pacleb J.M."/>
            <person name="Park S."/>
            <person name="Wan K.H."/>
            <person name="Rubin G.M."/>
            <person name="Celniker S.E."/>
        </authorList>
    </citation>
    <scope>NUCLEOTIDE SEQUENCE [LARGE SCALE MRNA]</scope>
    <scope>RNA EDITING OF POSITION 365</scope>
    <source>
        <strain evidence="11">Berkeley</strain>
        <tissue evidence="7">Head</tissue>
    </source>
</reference>
<reference evidence="9" key="4">
    <citation type="journal article" date="2006" name="RNA">
        <title>RNA editing in Drosophila melanogaster: new targets and functional consequences.</title>
        <authorList>
            <person name="Stapleton M."/>
            <person name="Carlson J.W."/>
            <person name="Celniker S.E."/>
        </authorList>
    </citation>
    <scope>RNA EDITING OF POSITION 365</scope>
</reference>
<evidence type="ECO:0000250" key="1">
    <source>
        <dbReference type="UniProtKB" id="P20339"/>
    </source>
</evidence>
<evidence type="ECO:0000250" key="2">
    <source>
        <dbReference type="UniProtKB" id="P35285"/>
    </source>
</evidence>
<evidence type="ECO:0000250" key="3">
    <source>
        <dbReference type="UniProtKB" id="P51156"/>
    </source>
</evidence>
<evidence type="ECO:0000255" key="4"/>
<evidence type="ECO:0000256" key="5">
    <source>
        <dbReference type="SAM" id="MobiDB-lite"/>
    </source>
</evidence>
<evidence type="ECO:0000269" key="6">
    <source>
    </source>
</evidence>
<evidence type="ECO:0000269" key="7">
    <source>
    </source>
</evidence>
<evidence type="ECO:0000269" key="8">
    <source>
    </source>
</evidence>
<evidence type="ECO:0000305" key="9"/>
<evidence type="ECO:0000312" key="10">
    <source>
        <dbReference type="EMBL" id="AAF51708.2"/>
    </source>
</evidence>
<evidence type="ECO:0000312" key="11">
    <source>
        <dbReference type="EMBL" id="AAL27637.1"/>
    </source>
</evidence>
<comment type="function">
    <text evidence="3">Participates in exocrine secretion.</text>
</comment>
<comment type="subcellular location">
    <subcellularLocation>
        <location evidence="3">Cell membrane</location>
        <topology evidence="3">Lipid-anchor</topology>
        <orientation evidence="3">Cytoplasmic side</orientation>
    </subcellularLocation>
</comment>
<comment type="RNA editing">
    <location>
        <position position="365" evidence="7 8"/>
    </location>
    <text evidence="8">Partially edited. Target of Adar.</text>
</comment>
<comment type="similarity">
    <text evidence="4">Belongs to the small GTPase superfamily. Rab family.</text>
</comment>
<sequence length="388" mass="43037">MASTAVGLGGGEGDPGAGGPPAGSAHPDDASSMSDDVFEDAETTQARIEELRRRPFGDGSYNPPAAPASVSASITTTTTQQQQQHHNPSHHHQSSHHQPSHHHHHHHHSQLSLTGSHHYHDDAIMAPVQRSATGYPGYRPSREAMQMYAYGTDDYDDDYNDGWRSYRYDEVDMHPAPSNAHQQPFDDTVNHKTILLGDSGVGKTSFLVKYNTGEFRLGSFSATVGIALTNKVVVVDGTRVKLQIWDTAGQERFRSVTHAYYRDAHALLLLYDVTNKTTYDNIRAWLGEIREYAQEDVVIVLIGNKADCSGSERQVKREDGERLGREHNVPFMETSAKTGLNVELSFTAVARQLKSRGYEHGDDGKFNVHDFVRDNTKARSVCAQCRNM</sequence>
<keyword id="KW-1003">Cell membrane</keyword>
<keyword id="KW-0342">GTP-binding</keyword>
<keyword id="KW-0449">Lipoprotein</keyword>
<keyword id="KW-0472">Membrane</keyword>
<keyword id="KW-0488">Methylation</keyword>
<keyword id="KW-0547">Nucleotide-binding</keyword>
<keyword id="KW-0564">Palmitate</keyword>
<keyword id="KW-0636">Prenylation</keyword>
<keyword id="KW-0653">Protein transport</keyword>
<keyword id="KW-1185">Reference proteome</keyword>
<keyword id="KW-0691">RNA editing</keyword>
<keyword id="KW-0813">Transport</keyword>
<gene>
    <name evidence="10" type="primary">Rab26</name>
    <name type="ORF">CG34410</name>
</gene>